<dbReference type="EC" id="1.2.1.12"/>
<dbReference type="PIR" id="JL0121">
    <property type="entry name" value="JL0121"/>
</dbReference>
<dbReference type="RefSeq" id="XP_018648500.1">
    <property type="nucleotide sequence ID" value="XM_018794048.1"/>
</dbReference>
<dbReference type="PDB" id="7JH0">
    <property type="method" value="X-ray"/>
    <property type="resolution" value="2.51 A"/>
    <property type="chains" value="A/B/C/D=1-338"/>
</dbReference>
<dbReference type="PDBsum" id="7JH0"/>
<dbReference type="SMR" id="P20287"/>
<dbReference type="FunCoup" id="P20287">
    <property type="interactions" value="471"/>
</dbReference>
<dbReference type="STRING" id="6183.P20287"/>
<dbReference type="EnsemblMetazoa" id="Smp_056970.2">
    <property type="protein sequence ID" value="Smp_056970.2"/>
    <property type="gene ID" value="Smp_056970"/>
</dbReference>
<dbReference type="GeneID" id="8345746"/>
<dbReference type="KEGG" id="smm:Smp_056970.1"/>
<dbReference type="WBParaSite" id="Smp_056970.1">
    <property type="protein sequence ID" value="Smp_056970.1"/>
    <property type="gene ID" value="Smp_056970"/>
</dbReference>
<dbReference type="CTD" id="8345746"/>
<dbReference type="eggNOG" id="KOG0657">
    <property type="taxonomic scope" value="Eukaryota"/>
</dbReference>
<dbReference type="InParanoid" id="P20287"/>
<dbReference type="OMA" id="IPWDKDG"/>
<dbReference type="OrthoDB" id="1152826at2759"/>
<dbReference type="PhylomeDB" id="P20287"/>
<dbReference type="UniPathway" id="UPA00109">
    <property type="reaction ID" value="UER00184"/>
</dbReference>
<dbReference type="Proteomes" id="UP000008854">
    <property type="component" value="Unassembled WGS sequence"/>
</dbReference>
<dbReference type="GO" id="GO:0005829">
    <property type="term" value="C:cytosol"/>
    <property type="evidence" value="ECO:0007669"/>
    <property type="project" value="TreeGrafter"/>
</dbReference>
<dbReference type="GO" id="GO:0016020">
    <property type="term" value="C:membrane"/>
    <property type="evidence" value="ECO:0007669"/>
    <property type="project" value="UniProtKB-KW"/>
</dbReference>
<dbReference type="GO" id="GO:0004365">
    <property type="term" value="F:glyceraldehyde-3-phosphate dehydrogenase (NAD+) (phosphorylating) activity"/>
    <property type="evidence" value="ECO:0007669"/>
    <property type="project" value="UniProtKB-EC"/>
</dbReference>
<dbReference type="GO" id="GO:0051287">
    <property type="term" value="F:NAD binding"/>
    <property type="evidence" value="ECO:0007669"/>
    <property type="project" value="InterPro"/>
</dbReference>
<dbReference type="GO" id="GO:0050661">
    <property type="term" value="F:NADP binding"/>
    <property type="evidence" value="ECO:0007669"/>
    <property type="project" value="InterPro"/>
</dbReference>
<dbReference type="GO" id="GO:0006006">
    <property type="term" value="P:glucose metabolic process"/>
    <property type="evidence" value="ECO:0007669"/>
    <property type="project" value="InterPro"/>
</dbReference>
<dbReference type="GO" id="GO:0006096">
    <property type="term" value="P:glycolytic process"/>
    <property type="evidence" value="ECO:0007669"/>
    <property type="project" value="UniProtKB-UniPathway"/>
</dbReference>
<dbReference type="CDD" id="cd18126">
    <property type="entry name" value="GAPDH_I_C"/>
    <property type="match status" value="1"/>
</dbReference>
<dbReference type="CDD" id="cd05214">
    <property type="entry name" value="GAPDH_I_N"/>
    <property type="match status" value="1"/>
</dbReference>
<dbReference type="FunFam" id="3.30.360.10:FF:000001">
    <property type="entry name" value="Glyceraldehyde-3-phosphate dehydrogenase"/>
    <property type="match status" value="1"/>
</dbReference>
<dbReference type="FunFam" id="3.40.50.720:FF:000266">
    <property type="entry name" value="Glyceraldehyde-3-phosphate dehydrogenase"/>
    <property type="match status" value="1"/>
</dbReference>
<dbReference type="Gene3D" id="3.30.360.10">
    <property type="entry name" value="Dihydrodipicolinate Reductase, domain 2"/>
    <property type="match status" value="1"/>
</dbReference>
<dbReference type="Gene3D" id="3.40.50.720">
    <property type="entry name" value="NAD(P)-binding Rossmann-like Domain"/>
    <property type="match status" value="1"/>
</dbReference>
<dbReference type="InterPro" id="IPR020831">
    <property type="entry name" value="GlycerAld/Erythrose_P_DH"/>
</dbReference>
<dbReference type="InterPro" id="IPR020830">
    <property type="entry name" value="GlycerAld_3-P_DH_AS"/>
</dbReference>
<dbReference type="InterPro" id="IPR020829">
    <property type="entry name" value="GlycerAld_3-P_DH_cat"/>
</dbReference>
<dbReference type="InterPro" id="IPR020828">
    <property type="entry name" value="GlycerAld_3-P_DH_NAD(P)-bd"/>
</dbReference>
<dbReference type="InterPro" id="IPR006424">
    <property type="entry name" value="Glyceraldehyde-3-P_DH_1"/>
</dbReference>
<dbReference type="InterPro" id="IPR036291">
    <property type="entry name" value="NAD(P)-bd_dom_sf"/>
</dbReference>
<dbReference type="NCBIfam" id="TIGR01534">
    <property type="entry name" value="GAPDH-I"/>
    <property type="match status" value="1"/>
</dbReference>
<dbReference type="PANTHER" id="PTHR10836">
    <property type="entry name" value="GLYCERALDEHYDE 3-PHOSPHATE DEHYDROGENASE"/>
    <property type="match status" value="1"/>
</dbReference>
<dbReference type="PANTHER" id="PTHR10836:SF76">
    <property type="entry name" value="GLYCERALDEHYDE-3-PHOSPHATE DEHYDROGENASE-RELATED"/>
    <property type="match status" value="1"/>
</dbReference>
<dbReference type="Pfam" id="PF02800">
    <property type="entry name" value="Gp_dh_C"/>
    <property type="match status" value="1"/>
</dbReference>
<dbReference type="Pfam" id="PF00044">
    <property type="entry name" value="Gp_dh_N"/>
    <property type="match status" value="1"/>
</dbReference>
<dbReference type="PIRSF" id="PIRSF000149">
    <property type="entry name" value="GAP_DH"/>
    <property type="match status" value="1"/>
</dbReference>
<dbReference type="PRINTS" id="PR00078">
    <property type="entry name" value="G3PDHDRGNASE"/>
</dbReference>
<dbReference type="SMART" id="SM00846">
    <property type="entry name" value="Gp_dh_N"/>
    <property type="match status" value="1"/>
</dbReference>
<dbReference type="SUPFAM" id="SSF55347">
    <property type="entry name" value="Glyceraldehyde-3-phosphate dehydrogenase-like, C-terminal domain"/>
    <property type="match status" value="1"/>
</dbReference>
<dbReference type="SUPFAM" id="SSF51735">
    <property type="entry name" value="NAD(P)-binding Rossmann-fold domains"/>
    <property type="match status" value="1"/>
</dbReference>
<dbReference type="PROSITE" id="PS00071">
    <property type="entry name" value="GAPDH"/>
    <property type="match status" value="1"/>
</dbReference>
<protein>
    <recommendedName>
        <fullName evidence="7">Glyceraldehyde-3-phosphate dehydrogenase</fullName>
        <shortName evidence="7">GAPDH</shortName>
        <ecNumber>1.2.1.12</ecNumber>
    </recommendedName>
    <alternativeName>
        <fullName evidence="6">Major larval surface antigen</fullName>
    </alternativeName>
    <alternativeName>
        <fullName evidence="6">P-37</fullName>
    </alternativeName>
    <alternativeName>
        <fullName evidence="7">SmGAPDH</fullName>
    </alternativeName>
</protein>
<reference key="1">
    <citation type="journal article" date="1989" name="J. Exp. Med.">
        <title>The major parasite surface antigen associated with human resistance to schistosomiasis is a 37-kD glyceraldehyde-3P-dehydrogenase.</title>
        <authorList>
            <person name="Goudot-Crozel V."/>
            <person name="Caillol D."/>
            <person name="Djabali M."/>
            <person name="Dessein A.J."/>
        </authorList>
    </citation>
    <scope>NUCLEOTIDE SEQUENCE [MRNA]</scope>
    <scope>SUBCELLULAR LOCATION</scope>
    <source>
        <strain evidence="6">Puerto Rican</strain>
    </source>
</reference>
<reference key="2">
    <citation type="journal article" date="2021" name="Biochimie">
        <title>Structure determination and analyses of the GAPDH from the parasite Schistosoma mansoni, the first one from a platyhelminth.</title>
        <authorList>
            <person name="Boreiko S."/>
            <person name="Silva M."/>
            <person name="Iulek J."/>
        </authorList>
    </citation>
    <scope>X-RAY CRYSTALLOGRAPHY (2.51 ANGSTROMS)</scope>
    <scope>SUBUNIT</scope>
</reference>
<feature type="chain" id="PRO_0000145520" description="Glyceraldehyde-3-phosphate dehydrogenase">
    <location>
        <begin position="1"/>
        <end position="338"/>
    </location>
</feature>
<feature type="active site" description="Nucleophile" evidence="3">
    <location>
        <position position="153"/>
    </location>
</feature>
<feature type="binding site" evidence="2">
    <location>
        <position position="13"/>
    </location>
    <ligand>
        <name>NAD(+)</name>
        <dbReference type="ChEBI" id="CHEBI:57540"/>
    </ligand>
</feature>
<feature type="binding site" evidence="2">
    <location>
        <position position="14"/>
    </location>
    <ligand>
        <name>NAD(+)</name>
        <dbReference type="ChEBI" id="CHEBI:57540"/>
    </ligand>
</feature>
<feature type="binding site" evidence="2">
    <location>
        <position position="35"/>
    </location>
    <ligand>
        <name>NAD(+)</name>
        <dbReference type="ChEBI" id="CHEBI:57540"/>
    </ligand>
</feature>
<feature type="binding site" evidence="2">
    <location>
        <position position="80"/>
    </location>
    <ligand>
        <name>NAD(+)</name>
        <dbReference type="ChEBI" id="CHEBI:57540"/>
    </ligand>
</feature>
<feature type="binding site" evidence="1">
    <location>
        <position position="123"/>
    </location>
    <ligand>
        <name>NAD(+)</name>
        <dbReference type="ChEBI" id="CHEBI:57540"/>
    </ligand>
</feature>
<feature type="binding site" evidence="2">
    <location>
        <position position="152"/>
    </location>
    <ligand>
        <name>D-glyceraldehyde 3-phosphate</name>
        <dbReference type="ChEBI" id="CHEBI:59776"/>
    </ligand>
</feature>
<feature type="binding site" evidence="2">
    <location>
        <position position="153"/>
    </location>
    <ligand>
        <name>D-glyceraldehyde 3-phosphate</name>
        <dbReference type="ChEBI" id="CHEBI:59776"/>
    </ligand>
</feature>
<feature type="binding site" evidence="2">
    <location>
        <position position="154"/>
    </location>
    <ligand>
        <name>D-glyceraldehyde 3-phosphate</name>
        <dbReference type="ChEBI" id="CHEBI:59776"/>
    </ligand>
</feature>
<feature type="binding site" evidence="1">
    <location>
        <position position="183"/>
    </location>
    <ligand>
        <name>D-glyceraldehyde 3-phosphate</name>
        <dbReference type="ChEBI" id="CHEBI:59776"/>
    </ligand>
</feature>
<feature type="binding site" evidence="1">
    <location>
        <position position="198"/>
    </location>
    <ligand>
        <name>D-glyceraldehyde 3-phosphate</name>
        <dbReference type="ChEBI" id="CHEBI:59776"/>
    </ligand>
</feature>
<feature type="binding site" evidence="2">
    <location>
        <position position="212"/>
    </location>
    <ligand>
        <name>D-glyceraldehyde 3-phosphate</name>
        <dbReference type="ChEBI" id="CHEBI:59776"/>
    </ligand>
</feature>
<feature type="binding site" evidence="2">
    <location>
        <position position="213"/>
    </location>
    <ligand>
        <name>D-glyceraldehyde 3-phosphate</name>
        <dbReference type="ChEBI" id="CHEBI:59776"/>
    </ligand>
</feature>
<feature type="binding site" evidence="2">
    <location>
        <position position="235"/>
    </location>
    <ligand>
        <name>D-glyceraldehyde 3-phosphate</name>
        <dbReference type="ChEBI" id="CHEBI:59776"/>
    </ligand>
</feature>
<feature type="binding site" evidence="2">
    <location>
        <position position="317"/>
    </location>
    <ligand>
        <name>NAD(+)</name>
        <dbReference type="ChEBI" id="CHEBI:57540"/>
    </ligand>
</feature>
<feature type="site" description="Activates thiol group during catalysis" evidence="2">
    <location>
        <position position="180"/>
    </location>
</feature>
<feature type="strand" evidence="9">
    <location>
        <begin position="4"/>
        <end position="9"/>
    </location>
</feature>
<feature type="helix" evidence="9">
    <location>
        <begin position="14"/>
        <end position="25"/>
    </location>
</feature>
<feature type="strand" evidence="9">
    <location>
        <begin position="27"/>
        <end position="34"/>
    </location>
</feature>
<feature type="helix" evidence="9">
    <location>
        <begin position="40"/>
        <end position="48"/>
    </location>
</feature>
<feature type="turn" evidence="9">
    <location>
        <begin position="51"/>
        <end position="53"/>
    </location>
</feature>
<feature type="strand" evidence="9">
    <location>
        <begin position="60"/>
        <end position="69"/>
    </location>
</feature>
<feature type="strand" evidence="9">
    <location>
        <begin position="72"/>
        <end position="77"/>
    </location>
</feature>
<feature type="helix" evidence="9">
    <location>
        <begin position="82"/>
        <end position="84"/>
    </location>
</feature>
<feature type="helix" evidence="9">
    <location>
        <begin position="87"/>
        <end position="90"/>
    </location>
</feature>
<feature type="strand" evidence="9">
    <location>
        <begin position="93"/>
        <end position="97"/>
    </location>
</feature>
<feature type="strand" evidence="9">
    <location>
        <begin position="99"/>
        <end position="101"/>
    </location>
</feature>
<feature type="helix" evidence="9">
    <location>
        <begin position="105"/>
        <end position="108"/>
    </location>
</feature>
<feature type="turn" evidence="9">
    <location>
        <begin position="109"/>
        <end position="115"/>
    </location>
</feature>
<feature type="strand" evidence="9">
    <location>
        <begin position="119"/>
        <end position="124"/>
    </location>
</feature>
<feature type="strand" evidence="9">
    <location>
        <begin position="127"/>
        <end position="129"/>
    </location>
</feature>
<feature type="turn" evidence="9">
    <location>
        <begin position="134"/>
        <end position="136"/>
    </location>
</feature>
<feature type="helix" evidence="9">
    <location>
        <begin position="138"/>
        <end position="140"/>
    </location>
</feature>
<feature type="strand" evidence="9">
    <location>
        <begin position="147"/>
        <end position="149"/>
    </location>
</feature>
<feature type="helix" evidence="9">
    <location>
        <begin position="153"/>
        <end position="168"/>
    </location>
</feature>
<feature type="strand" evidence="9">
    <location>
        <begin position="171"/>
        <end position="181"/>
    </location>
</feature>
<feature type="strand" evidence="9">
    <location>
        <begin position="186"/>
        <end position="190"/>
    </location>
</feature>
<feature type="helix" evidence="9">
    <location>
        <begin position="197"/>
        <end position="200"/>
    </location>
</feature>
<feature type="turn" evidence="9">
    <location>
        <begin position="203"/>
        <end position="205"/>
    </location>
</feature>
<feature type="strand" evidence="9">
    <location>
        <begin position="208"/>
        <end position="211"/>
    </location>
</feature>
<feature type="strand" evidence="9">
    <location>
        <begin position="213"/>
        <end position="216"/>
    </location>
</feature>
<feature type="helix" evidence="9">
    <location>
        <begin position="217"/>
        <end position="221"/>
    </location>
</feature>
<feature type="helix" evidence="9">
    <location>
        <begin position="223"/>
        <end position="225"/>
    </location>
</feature>
<feature type="turn" evidence="9">
    <location>
        <begin position="226"/>
        <end position="228"/>
    </location>
</feature>
<feature type="strand" evidence="9">
    <location>
        <begin position="229"/>
        <end position="237"/>
    </location>
</feature>
<feature type="strand" evidence="9">
    <location>
        <begin position="242"/>
        <end position="252"/>
    </location>
</feature>
<feature type="helix" evidence="9">
    <location>
        <begin position="256"/>
        <end position="268"/>
    </location>
</feature>
<feature type="turn" evidence="9">
    <location>
        <begin position="269"/>
        <end position="274"/>
    </location>
</feature>
<feature type="strand" evidence="9">
    <location>
        <begin position="275"/>
        <end position="278"/>
    </location>
</feature>
<feature type="helix" evidence="9">
    <location>
        <begin position="284"/>
        <end position="287"/>
    </location>
</feature>
<feature type="strand" evidence="9">
    <location>
        <begin position="293"/>
        <end position="297"/>
    </location>
</feature>
<feature type="turn" evidence="9">
    <location>
        <begin position="298"/>
        <end position="300"/>
    </location>
</feature>
<feature type="strand" evidence="9">
    <location>
        <begin position="302"/>
        <end position="315"/>
    </location>
</feature>
<feature type="helix" evidence="9">
    <location>
        <begin position="319"/>
        <end position="337"/>
    </location>
</feature>
<accession>P20287</accession>
<evidence type="ECO:0000250" key="1">
    <source>
        <dbReference type="UniProtKB" id="P00362"/>
    </source>
</evidence>
<evidence type="ECO:0000250" key="2">
    <source>
        <dbReference type="UniProtKB" id="P0A9B2"/>
    </source>
</evidence>
<evidence type="ECO:0000255" key="3">
    <source>
        <dbReference type="PROSITE-ProRule" id="PRU10009"/>
    </source>
</evidence>
<evidence type="ECO:0000269" key="4">
    <source>
    </source>
</evidence>
<evidence type="ECO:0000269" key="5">
    <source>
    </source>
</evidence>
<evidence type="ECO:0000303" key="6">
    <source>
    </source>
</evidence>
<evidence type="ECO:0000303" key="7">
    <source>
    </source>
</evidence>
<evidence type="ECO:0000305" key="8"/>
<evidence type="ECO:0007829" key="9">
    <source>
        <dbReference type="PDB" id="7JH0"/>
    </source>
</evidence>
<keyword id="KW-0002">3D-structure</keyword>
<keyword id="KW-0324">Glycolysis</keyword>
<keyword id="KW-0472">Membrane</keyword>
<keyword id="KW-0520">NAD</keyword>
<keyword id="KW-0560">Oxidoreductase</keyword>
<keyword id="KW-1185">Reference proteome</keyword>
<organism>
    <name type="scientific">Schistosoma mansoni</name>
    <name type="common">Blood fluke</name>
    <dbReference type="NCBI Taxonomy" id="6183"/>
    <lineage>
        <taxon>Eukaryota</taxon>
        <taxon>Metazoa</taxon>
        <taxon>Spiralia</taxon>
        <taxon>Lophotrochozoa</taxon>
        <taxon>Platyhelminthes</taxon>
        <taxon>Trematoda</taxon>
        <taxon>Digenea</taxon>
        <taxon>Strigeidida</taxon>
        <taxon>Schistosomatoidea</taxon>
        <taxon>Schistosomatidae</taxon>
        <taxon>Schistosoma</taxon>
    </lineage>
</organism>
<name>G3P_SCHMA</name>
<sequence>MSRAKVGINGFGRIGRLVLRAAFLKNTVDVVSVNDPFIDLEYMVYMIKRDSTHGTFPGEVSTENGKLKVNGKLISVHCERDPANIPWDKDGAEYVVESTGVFTTIDKAQAHIKNNRAKKVIISAPSADAPMFVVGVNENSYEKSMSVVSNASCTTNCLAPLAKVIHDKFEIVEGLMTTVHSFTATQKVVDGPSSKLWRDGRGAMQNIIPASTGAAKAVGKVIPALNGKLTGMAFRVPTPDVSVVDLTCRLGKGASYEEIKAAVKAAASGPLKGILEYTEDEVVSSDFVGSTSSSIFDAKAGISLNNNFVKLVSWYDNEFGYSCRVVDLITHMHKVDHA</sequence>
<comment type="function">
    <text evidence="4">This antigen is associated with human resistance to schistosomiasis.</text>
</comment>
<comment type="catalytic activity">
    <reaction evidence="3">
        <text>D-glyceraldehyde 3-phosphate + phosphate + NAD(+) = (2R)-3-phospho-glyceroyl phosphate + NADH + H(+)</text>
        <dbReference type="Rhea" id="RHEA:10300"/>
        <dbReference type="ChEBI" id="CHEBI:15378"/>
        <dbReference type="ChEBI" id="CHEBI:43474"/>
        <dbReference type="ChEBI" id="CHEBI:57540"/>
        <dbReference type="ChEBI" id="CHEBI:57604"/>
        <dbReference type="ChEBI" id="CHEBI:57945"/>
        <dbReference type="ChEBI" id="CHEBI:59776"/>
        <dbReference type="EC" id="1.2.1.12"/>
    </reaction>
</comment>
<comment type="pathway">
    <text>Carbohydrate degradation; glycolysis; pyruvate from D-glyceraldehyde 3-phosphate: step 1/5.</text>
</comment>
<comment type="subunit">
    <text evidence="5">Homotetramer.</text>
</comment>
<comment type="subcellular location">
    <subcellularLocation>
        <location evidence="4">Tegument membrane</location>
    </subcellularLocation>
</comment>
<comment type="similarity">
    <text evidence="8">Belongs to the glyceraldehyde-3-phosphate dehydrogenase family.</text>
</comment>
<proteinExistence type="evidence at protein level"/>